<accession>Q9EZV1</accession>
<protein>
    <recommendedName>
        <fullName evidence="1">Chaperonin GroEL</fullName>
        <ecNumber evidence="1">5.6.1.7</ecNumber>
    </recommendedName>
    <alternativeName>
        <fullName evidence="1">60 kDa chaperonin</fullName>
    </alternativeName>
    <alternativeName>
        <fullName evidence="1">Chaperonin-60</fullName>
        <shortName evidence="1">Cpn60</shortName>
    </alternativeName>
</protein>
<name>CH60_THENE</name>
<dbReference type="EC" id="5.6.1.7" evidence="1"/>
<dbReference type="EMBL" id="AF275319">
    <property type="protein sequence ID" value="AAG44819.1"/>
    <property type="molecule type" value="Genomic_DNA"/>
</dbReference>
<dbReference type="SMR" id="Q9EZV1"/>
<dbReference type="GO" id="GO:0005737">
    <property type="term" value="C:cytoplasm"/>
    <property type="evidence" value="ECO:0007669"/>
    <property type="project" value="UniProtKB-SubCell"/>
</dbReference>
<dbReference type="GO" id="GO:0005524">
    <property type="term" value="F:ATP binding"/>
    <property type="evidence" value="ECO:0007669"/>
    <property type="project" value="UniProtKB-UniRule"/>
</dbReference>
<dbReference type="GO" id="GO:0140662">
    <property type="term" value="F:ATP-dependent protein folding chaperone"/>
    <property type="evidence" value="ECO:0007669"/>
    <property type="project" value="InterPro"/>
</dbReference>
<dbReference type="GO" id="GO:0016853">
    <property type="term" value="F:isomerase activity"/>
    <property type="evidence" value="ECO:0007669"/>
    <property type="project" value="UniProtKB-KW"/>
</dbReference>
<dbReference type="GO" id="GO:0051082">
    <property type="term" value="F:unfolded protein binding"/>
    <property type="evidence" value="ECO:0007669"/>
    <property type="project" value="UniProtKB-UniRule"/>
</dbReference>
<dbReference type="GO" id="GO:0042026">
    <property type="term" value="P:protein refolding"/>
    <property type="evidence" value="ECO:0007669"/>
    <property type="project" value="UniProtKB-UniRule"/>
</dbReference>
<dbReference type="CDD" id="cd03344">
    <property type="entry name" value="GroEL"/>
    <property type="match status" value="1"/>
</dbReference>
<dbReference type="FunFam" id="1.10.560.10:FF:000001">
    <property type="entry name" value="60 kDa chaperonin"/>
    <property type="match status" value="1"/>
</dbReference>
<dbReference type="FunFam" id="3.50.7.10:FF:000001">
    <property type="entry name" value="60 kDa chaperonin"/>
    <property type="match status" value="1"/>
</dbReference>
<dbReference type="Gene3D" id="3.50.7.10">
    <property type="entry name" value="GroEL"/>
    <property type="match status" value="1"/>
</dbReference>
<dbReference type="Gene3D" id="1.10.560.10">
    <property type="entry name" value="GroEL-like equatorial domain"/>
    <property type="match status" value="1"/>
</dbReference>
<dbReference type="Gene3D" id="3.30.260.10">
    <property type="entry name" value="TCP-1-like chaperonin intermediate domain"/>
    <property type="match status" value="1"/>
</dbReference>
<dbReference type="HAMAP" id="MF_00600">
    <property type="entry name" value="CH60"/>
    <property type="match status" value="1"/>
</dbReference>
<dbReference type="InterPro" id="IPR018370">
    <property type="entry name" value="Chaperonin_Cpn60_CS"/>
</dbReference>
<dbReference type="InterPro" id="IPR001844">
    <property type="entry name" value="Cpn60/GroEL"/>
</dbReference>
<dbReference type="InterPro" id="IPR002423">
    <property type="entry name" value="Cpn60/GroEL/TCP-1"/>
</dbReference>
<dbReference type="InterPro" id="IPR027409">
    <property type="entry name" value="GroEL-like_apical_dom_sf"/>
</dbReference>
<dbReference type="InterPro" id="IPR027413">
    <property type="entry name" value="GROEL-like_equatorial_sf"/>
</dbReference>
<dbReference type="InterPro" id="IPR027410">
    <property type="entry name" value="TCP-1-like_intermed_sf"/>
</dbReference>
<dbReference type="NCBIfam" id="TIGR02348">
    <property type="entry name" value="GroEL"/>
    <property type="match status" value="1"/>
</dbReference>
<dbReference type="NCBIfam" id="NF000592">
    <property type="entry name" value="PRK00013.1"/>
    <property type="match status" value="1"/>
</dbReference>
<dbReference type="NCBIfam" id="NF009487">
    <property type="entry name" value="PRK12849.1"/>
    <property type="match status" value="1"/>
</dbReference>
<dbReference type="NCBIfam" id="NF009488">
    <property type="entry name" value="PRK12850.1"/>
    <property type="match status" value="1"/>
</dbReference>
<dbReference type="NCBIfam" id="NF009489">
    <property type="entry name" value="PRK12851.1"/>
    <property type="match status" value="1"/>
</dbReference>
<dbReference type="PANTHER" id="PTHR45633">
    <property type="entry name" value="60 KDA HEAT SHOCK PROTEIN, MITOCHONDRIAL"/>
    <property type="match status" value="1"/>
</dbReference>
<dbReference type="Pfam" id="PF00118">
    <property type="entry name" value="Cpn60_TCP1"/>
    <property type="match status" value="1"/>
</dbReference>
<dbReference type="PRINTS" id="PR00298">
    <property type="entry name" value="CHAPERONIN60"/>
</dbReference>
<dbReference type="SUPFAM" id="SSF52029">
    <property type="entry name" value="GroEL apical domain-like"/>
    <property type="match status" value="1"/>
</dbReference>
<dbReference type="SUPFAM" id="SSF48592">
    <property type="entry name" value="GroEL equatorial domain-like"/>
    <property type="match status" value="1"/>
</dbReference>
<dbReference type="SUPFAM" id="SSF54849">
    <property type="entry name" value="GroEL-intermediate domain like"/>
    <property type="match status" value="1"/>
</dbReference>
<dbReference type="PROSITE" id="PS00296">
    <property type="entry name" value="CHAPERONINS_CPN60"/>
    <property type="match status" value="1"/>
</dbReference>
<reference key="1">
    <citation type="submission" date="2000-06" db="EMBL/GenBank/DDBJ databases">
        <title>Effect of thermostable chaperonins on synthesis of proteins in vitro.</title>
        <authorList>
            <person name="Snapyan M."/>
            <person name="Gochikyan A."/>
            <person name="Weigel P."/>
            <person name="Sakanyan V."/>
        </authorList>
    </citation>
    <scope>NUCLEOTIDE SEQUENCE [GENOMIC DNA]</scope>
    <source>
        <strain>DSM 5068 / LA4</strain>
    </source>
</reference>
<sequence>MPKLLKFNEEARRALERGVDKVANAVKITLGPKGRNVVIEKSWGSPTITNDGVSIAKEIELEDKFENLGAQLVKEVASKTNDVAGDGTTTATVLAQAMIKEGLKNVAAGANPILLKRGIDKAVERAVEEIKKLSKKLSGREDIAHVAAISANSPEIGELIAEAMDKVGEDGVITVEDSKTLETYVEFTEGMQFDRGYISPYFVTDAEKMEVVLKEPSILITDRKLSAVKPLIPILEKVAQTGKPLLVIAEDVEGEALTTLVLNKLKGTLQSCAVKAPGFGERRKAMLQDIAILTGGQVASEELGINLEDLTLEDLGRADLVRVKKDETIIIGGKGDPEAIKKRIAQIKAQIEETTSEYEKETLQERMAKLAGGVAVIKVGAATETELKEKKHRIEDALSATRAAVEEGIVPGGGVTLLRSRKAVEKLLEELDGDEKIGAQIVYKALSAPIRQIAENAGYDGAVIIEKILASDDPAYGFDALRGEFGNMFEKGIIDPAKVTRSALQNAASIAGMLLTTEVLVVEKPEEKKETPSLPEEY</sequence>
<proteinExistence type="inferred from homology"/>
<feature type="chain" id="PRO_0000063580" description="Chaperonin GroEL">
    <location>
        <begin position="1"/>
        <end position="538"/>
    </location>
</feature>
<feature type="binding site" evidence="1">
    <location>
        <begin position="29"/>
        <end position="32"/>
    </location>
    <ligand>
        <name>ATP</name>
        <dbReference type="ChEBI" id="CHEBI:30616"/>
    </ligand>
</feature>
<feature type="binding site" evidence="1">
    <location>
        <begin position="86"/>
        <end position="90"/>
    </location>
    <ligand>
        <name>ATP</name>
        <dbReference type="ChEBI" id="CHEBI:30616"/>
    </ligand>
</feature>
<feature type="binding site" evidence="1">
    <location>
        <position position="413"/>
    </location>
    <ligand>
        <name>ATP</name>
        <dbReference type="ChEBI" id="CHEBI:30616"/>
    </ligand>
</feature>
<feature type="binding site" evidence="1">
    <location>
        <begin position="479"/>
        <end position="481"/>
    </location>
    <ligand>
        <name>ATP</name>
        <dbReference type="ChEBI" id="CHEBI:30616"/>
    </ligand>
</feature>
<feature type="binding site" evidence="1">
    <location>
        <position position="495"/>
    </location>
    <ligand>
        <name>ATP</name>
        <dbReference type="ChEBI" id="CHEBI:30616"/>
    </ligand>
</feature>
<keyword id="KW-0067">ATP-binding</keyword>
<keyword id="KW-0143">Chaperone</keyword>
<keyword id="KW-0963">Cytoplasm</keyword>
<keyword id="KW-0413">Isomerase</keyword>
<keyword id="KW-0547">Nucleotide-binding</keyword>
<comment type="function">
    <text evidence="1">Together with its co-chaperonin GroES, plays an essential role in assisting protein folding. The GroEL-GroES system forms a nano-cage that allows encapsulation of the non-native substrate proteins and provides a physical environment optimized to promote and accelerate protein folding.</text>
</comment>
<comment type="catalytic activity">
    <reaction evidence="1">
        <text>ATP + H2O + a folded polypeptide = ADP + phosphate + an unfolded polypeptide.</text>
        <dbReference type="EC" id="5.6.1.7"/>
    </reaction>
</comment>
<comment type="subunit">
    <text evidence="1">Forms a cylinder of 14 subunits composed of two heptameric rings stacked back-to-back. Interacts with the co-chaperonin GroES.</text>
</comment>
<comment type="subcellular location">
    <subcellularLocation>
        <location evidence="1">Cytoplasm</location>
    </subcellularLocation>
</comment>
<comment type="similarity">
    <text evidence="1">Belongs to the chaperonin (HSP60) family.</text>
</comment>
<organism>
    <name type="scientific">Thermotoga neapolitana</name>
    <dbReference type="NCBI Taxonomy" id="2337"/>
    <lineage>
        <taxon>Bacteria</taxon>
        <taxon>Thermotogati</taxon>
        <taxon>Thermotogota</taxon>
        <taxon>Thermotogae</taxon>
        <taxon>Thermotogales</taxon>
        <taxon>Thermotogaceae</taxon>
        <taxon>Thermotoga</taxon>
    </lineage>
</organism>
<evidence type="ECO:0000255" key="1">
    <source>
        <dbReference type="HAMAP-Rule" id="MF_00600"/>
    </source>
</evidence>
<gene>
    <name evidence="1" type="primary">groEL</name>
    <name evidence="1" type="synonym">groL</name>
</gene>